<accession>Q129V0</accession>
<comment type="function">
    <text evidence="1">Catalyzes the methylation of C-1 in cobalt-precorrin-5B to form cobalt-precorrin-6A.</text>
</comment>
<comment type="catalytic activity">
    <reaction evidence="1">
        <text>Co-precorrin-5B + S-adenosyl-L-methionine = Co-precorrin-6A + S-adenosyl-L-homocysteine</text>
        <dbReference type="Rhea" id="RHEA:26285"/>
        <dbReference type="ChEBI" id="CHEBI:57856"/>
        <dbReference type="ChEBI" id="CHEBI:59789"/>
        <dbReference type="ChEBI" id="CHEBI:60063"/>
        <dbReference type="ChEBI" id="CHEBI:60064"/>
        <dbReference type="EC" id="2.1.1.195"/>
    </reaction>
</comment>
<comment type="pathway">
    <text evidence="1">Cofactor biosynthesis; adenosylcobalamin biosynthesis; cob(II)yrinate a,c-diamide from sirohydrochlorin (anaerobic route): step 6/10.</text>
</comment>
<comment type="similarity">
    <text evidence="1">Belongs to the CbiD family.</text>
</comment>
<dbReference type="EC" id="2.1.1.195" evidence="1"/>
<dbReference type="EMBL" id="CP000316">
    <property type="protein sequence ID" value="ABE44692.1"/>
    <property type="molecule type" value="Genomic_DNA"/>
</dbReference>
<dbReference type="RefSeq" id="WP_011483690.1">
    <property type="nucleotide sequence ID" value="NC_007948.1"/>
</dbReference>
<dbReference type="SMR" id="Q129V0"/>
<dbReference type="STRING" id="296591.Bpro_2776"/>
<dbReference type="KEGG" id="pol:Bpro_2776"/>
<dbReference type="eggNOG" id="COG1903">
    <property type="taxonomic scope" value="Bacteria"/>
</dbReference>
<dbReference type="HOGENOM" id="CLU_041273_0_0_4"/>
<dbReference type="OrthoDB" id="6439987at2"/>
<dbReference type="UniPathway" id="UPA00148">
    <property type="reaction ID" value="UER00227"/>
</dbReference>
<dbReference type="Proteomes" id="UP000001983">
    <property type="component" value="Chromosome"/>
</dbReference>
<dbReference type="GO" id="GO:0043780">
    <property type="term" value="F:cobalt-precorrin-5B C1-methyltransferase activity"/>
    <property type="evidence" value="ECO:0007669"/>
    <property type="project" value="RHEA"/>
</dbReference>
<dbReference type="GO" id="GO:0019251">
    <property type="term" value="P:anaerobic cobalamin biosynthetic process"/>
    <property type="evidence" value="ECO:0007669"/>
    <property type="project" value="UniProtKB-UniRule"/>
</dbReference>
<dbReference type="GO" id="GO:0032259">
    <property type="term" value="P:methylation"/>
    <property type="evidence" value="ECO:0007669"/>
    <property type="project" value="UniProtKB-KW"/>
</dbReference>
<dbReference type="Gene3D" id="3.30.2110.10">
    <property type="entry name" value="CbiD-like"/>
    <property type="match status" value="1"/>
</dbReference>
<dbReference type="HAMAP" id="MF_00787">
    <property type="entry name" value="CbiD"/>
    <property type="match status" value="1"/>
</dbReference>
<dbReference type="InterPro" id="IPR002748">
    <property type="entry name" value="CbiD"/>
</dbReference>
<dbReference type="InterPro" id="IPR036074">
    <property type="entry name" value="CbiD_sf"/>
</dbReference>
<dbReference type="NCBIfam" id="TIGR00312">
    <property type="entry name" value="cbiD"/>
    <property type="match status" value="1"/>
</dbReference>
<dbReference type="NCBIfam" id="NF000849">
    <property type="entry name" value="PRK00075.1-1"/>
    <property type="match status" value="1"/>
</dbReference>
<dbReference type="PANTHER" id="PTHR35863">
    <property type="entry name" value="COBALT-PRECORRIN-5B C(1)-METHYLTRANSFERASE"/>
    <property type="match status" value="1"/>
</dbReference>
<dbReference type="PANTHER" id="PTHR35863:SF1">
    <property type="entry name" value="COBALT-PRECORRIN-5B C(1)-METHYLTRANSFERASE"/>
    <property type="match status" value="1"/>
</dbReference>
<dbReference type="Pfam" id="PF01888">
    <property type="entry name" value="CbiD"/>
    <property type="match status" value="1"/>
</dbReference>
<dbReference type="PIRSF" id="PIRSF026782">
    <property type="entry name" value="CbiD"/>
    <property type="match status" value="1"/>
</dbReference>
<dbReference type="SUPFAM" id="SSF111342">
    <property type="entry name" value="CbiD-like"/>
    <property type="match status" value="1"/>
</dbReference>
<feature type="chain" id="PRO_0000257769" description="Cobalt-precorrin-5B C(1)-methyltransferase">
    <location>
        <begin position="1"/>
        <end position="373"/>
    </location>
</feature>
<sequence>MMKKDAPRGTRTGFTTGACSAAAARAAVIGLVTGQVPDAVECLLPNGDLVTFAVQDGRVEGVGGGVGGGVSAHAMVIKDAGDDPDCTDKAHLTADVRLRHDLPGQVLLAGGFGVGTVTMPGLGLAVGGPAINPVPRRNIEANVRAVGQGLLDEVGLEVTISVPQGEEMTKKTLNARLGILGGISILGTTGIVKPYSTAAYRASVVQGVQVAGTLGHGVVVLTTGGRTEKFVMEEMPELPEPAFVQMGDFLRYAMGAAVKAGLKKVVIGGMVGKLTKIAQGETITHAGRAEVDTGLLAELAASVGAPPDVCDAIRGNETARYAGERMDALGLGQAFHTALAQRVIQTLRTRYPDQFELKVLVCDFDGRKIAEAS</sequence>
<organism>
    <name type="scientific">Polaromonas sp. (strain JS666 / ATCC BAA-500)</name>
    <dbReference type="NCBI Taxonomy" id="296591"/>
    <lineage>
        <taxon>Bacteria</taxon>
        <taxon>Pseudomonadati</taxon>
        <taxon>Pseudomonadota</taxon>
        <taxon>Betaproteobacteria</taxon>
        <taxon>Burkholderiales</taxon>
        <taxon>Comamonadaceae</taxon>
        <taxon>Polaromonas</taxon>
    </lineage>
</organism>
<gene>
    <name evidence="1" type="primary">cbiD</name>
    <name type="ordered locus">Bpro_2776</name>
</gene>
<reference key="1">
    <citation type="journal article" date="2008" name="Appl. Environ. Microbiol.">
        <title>The genome of Polaromonas sp. strain JS666: insights into the evolution of a hydrocarbon- and xenobiotic-degrading bacterium, and features of relevance to biotechnology.</title>
        <authorList>
            <person name="Mattes T.E."/>
            <person name="Alexander A.K."/>
            <person name="Richardson P.M."/>
            <person name="Munk A.C."/>
            <person name="Han C.S."/>
            <person name="Stothard P."/>
            <person name="Coleman N.V."/>
        </authorList>
    </citation>
    <scope>NUCLEOTIDE SEQUENCE [LARGE SCALE GENOMIC DNA]</scope>
    <source>
        <strain>JS666 / ATCC BAA-500</strain>
    </source>
</reference>
<proteinExistence type="inferred from homology"/>
<name>CBID_POLSJ</name>
<protein>
    <recommendedName>
        <fullName evidence="1">Cobalt-precorrin-5B C(1)-methyltransferase</fullName>
        <ecNumber evidence="1">2.1.1.195</ecNumber>
    </recommendedName>
    <alternativeName>
        <fullName evidence="1">Cobalt-precorrin-6A synthase</fullName>
    </alternativeName>
</protein>
<keyword id="KW-0169">Cobalamin biosynthesis</keyword>
<keyword id="KW-0489">Methyltransferase</keyword>
<keyword id="KW-1185">Reference proteome</keyword>
<keyword id="KW-0949">S-adenosyl-L-methionine</keyword>
<keyword id="KW-0808">Transferase</keyword>
<evidence type="ECO:0000255" key="1">
    <source>
        <dbReference type="HAMAP-Rule" id="MF_00787"/>
    </source>
</evidence>